<dbReference type="EC" id="1.17.7.3" evidence="1"/>
<dbReference type="EMBL" id="CP001182">
    <property type="protein sequence ID" value="ACJ40025.1"/>
    <property type="molecule type" value="Genomic_DNA"/>
</dbReference>
<dbReference type="RefSeq" id="WP_000572095.1">
    <property type="nucleotide sequence ID" value="NC_011586.2"/>
</dbReference>
<dbReference type="SMR" id="B7I5G7"/>
<dbReference type="GeneID" id="92892505"/>
<dbReference type="KEGG" id="abn:AB57_0604"/>
<dbReference type="HOGENOM" id="CLU_042258_0_0_6"/>
<dbReference type="UniPathway" id="UPA00056">
    <property type="reaction ID" value="UER00096"/>
</dbReference>
<dbReference type="Proteomes" id="UP000007094">
    <property type="component" value="Chromosome"/>
</dbReference>
<dbReference type="GO" id="GO:0051539">
    <property type="term" value="F:4 iron, 4 sulfur cluster binding"/>
    <property type="evidence" value="ECO:0007669"/>
    <property type="project" value="UniProtKB-UniRule"/>
</dbReference>
<dbReference type="GO" id="GO:0046429">
    <property type="term" value="F:4-hydroxy-3-methylbut-2-en-1-yl diphosphate synthase activity (ferredoxin)"/>
    <property type="evidence" value="ECO:0007669"/>
    <property type="project" value="UniProtKB-UniRule"/>
</dbReference>
<dbReference type="GO" id="GO:0141197">
    <property type="term" value="F:4-hydroxy-3-methylbut-2-enyl-diphosphate synthase activity (flavodoxin)"/>
    <property type="evidence" value="ECO:0007669"/>
    <property type="project" value="UniProtKB-EC"/>
</dbReference>
<dbReference type="GO" id="GO:0005506">
    <property type="term" value="F:iron ion binding"/>
    <property type="evidence" value="ECO:0007669"/>
    <property type="project" value="InterPro"/>
</dbReference>
<dbReference type="GO" id="GO:0019288">
    <property type="term" value="P:isopentenyl diphosphate biosynthetic process, methylerythritol 4-phosphate pathway"/>
    <property type="evidence" value="ECO:0007669"/>
    <property type="project" value="UniProtKB-UniRule"/>
</dbReference>
<dbReference type="GO" id="GO:0016114">
    <property type="term" value="P:terpenoid biosynthetic process"/>
    <property type="evidence" value="ECO:0007669"/>
    <property type="project" value="InterPro"/>
</dbReference>
<dbReference type="FunFam" id="3.20.20.20:FF:000001">
    <property type="entry name" value="4-hydroxy-3-methylbut-2-en-1-yl diphosphate synthase (flavodoxin)"/>
    <property type="match status" value="1"/>
</dbReference>
<dbReference type="Gene3D" id="3.20.20.20">
    <property type="entry name" value="Dihydropteroate synthase-like"/>
    <property type="match status" value="1"/>
</dbReference>
<dbReference type="Gene3D" id="3.30.413.10">
    <property type="entry name" value="Sulfite Reductase Hemoprotein, domain 1"/>
    <property type="match status" value="1"/>
</dbReference>
<dbReference type="HAMAP" id="MF_00159">
    <property type="entry name" value="IspG"/>
    <property type="match status" value="1"/>
</dbReference>
<dbReference type="InterPro" id="IPR011005">
    <property type="entry name" value="Dihydropteroate_synth-like_sf"/>
</dbReference>
<dbReference type="InterPro" id="IPR016425">
    <property type="entry name" value="IspG_bac"/>
</dbReference>
<dbReference type="InterPro" id="IPR004588">
    <property type="entry name" value="IspG_bac-typ"/>
</dbReference>
<dbReference type="InterPro" id="IPR045854">
    <property type="entry name" value="NO2/SO3_Rdtase_4Fe4S_sf"/>
</dbReference>
<dbReference type="NCBIfam" id="TIGR00612">
    <property type="entry name" value="ispG_gcpE"/>
    <property type="match status" value="1"/>
</dbReference>
<dbReference type="NCBIfam" id="NF001540">
    <property type="entry name" value="PRK00366.1"/>
    <property type="match status" value="1"/>
</dbReference>
<dbReference type="PANTHER" id="PTHR30454">
    <property type="entry name" value="4-HYDROXY-3-METHYLBUT-2-EN-1-YL DIPHOSPHATE SYNTHASE"/>
    <property type="match status" value="1"/>
</dbReference>
<dbReference type="PANTHER" id="PTHR30454:SF0">
    <property type="entry name" value="4-HYDROXY-3-METHYLBUT-2-EN-1-YL DIPHOSPHATE SYNTHASE (FERREDOXIN), CHLOROPLASTIC"/>
    <property type="match status" value="1"/>
</dbReference>
<dbReference type="Pfam" id="PF04551">
    <property type="entry name" value="GcpE"/>
    <property type="match status" value="1"/>
</dbReference>
<dbReference type="PIRSF" id="PIRSF004640">
    <property type="entry name" value="IspG"/>
    <property type="match status" value="1"/>
</dbReference>
<dbReference type="SUPFAM" id="SSF51717">
    <property type="entry name" value="Dihydropteroate synthetase-like"/>
    <property type="match status" value="1"/>
</dbReference>
<dbReference type="SUPFAM" id="SSF56014">
    <property type="entry name" value="Nitrite and sulphite reductase 4Fe-4S domain-like"/>
    <property type="match status" value="1"/>
</dbReference>
<keyword id="KW-0004">4Fe-4S</keyword>
<keyword id="KW-0408">Iron</keyword>
<keyword id="KW-0411">Iron-sulfur</keyword>
<keyword id="KW-0414">Isoprene biosynthesis</keyword>
<keyword id="KW-0479">Metal-binding</keyword>
<keyword id="KW-0560">Oxidoreductase</keyword>
<organism>
    <name type="scientific">Acinetobacter baumannii (strain AB0057)</name>
    <dbReference type="NCBI Taxonomy" id="480119"/>
    <lineage>
        <taxon>Bacteria</taxon>
        <taxon>Pseudomonadati</taxon>
        <taxon>Pseudomonadota</taxon>
        <taxon>Gammaproteobacteria</taxon>
        <taxon>Moraxellales</taxon>
        <taxon>Moraxellaceae</taxon>
        <taxon>Acinetobacter</taxon>
        <taxon>Acinetobacter calcoaceticus/baumannii complex</taxon>
    </lineage>
</organism>
<gene>
    <name evidence="1" type="primary">ispG</name>
    <name type="ordered locus">AB57_0604</name>
</gene>
<comment type="function">
    <text evidence="1">Converts 2C-methyl-D-erythritol 2,4-cyclodiphosphate (ME-2,4cPP) into 1-hydroxy-2-methyl-2-(E)-butenyl 4-diphosphate.</text>
</comment>
<comment type="catalytic activity">
    <reaction evidence="1">
        <text>(2E)-4-hydroxy-3-methylbut-2-enyl diphosphate + oxidized [flavodoxin] + H2O + 2 H(+) = 2-C-methyl-D-erythritol 2,4-cyclic diphosphate + reduced [flavodoxin]</text>
        <dbReference type="Rhea" id="RHEA:43604"/>
        <dbReference type="Rhea" id="RHEA-COMP:10622"/>
        <dbReference type="Rhea" id="RHEA-COMP:10623"/>
        <dbReference type="ChEBI" id="CHEBI:15377"/>
        <dbReference type="ChEBI" id="CHEBI:15378"/>
        <dbReference type="ChEBI" id="CHEBI:57618"/>
        <dbReference type="ChEBI" id="CHEBI:58210"/>
        <dbReference type="ChEBI" id="CHEBI:58483"/>
        <dbReference type="ChEBI" id="CHEBI:128753"/>
        <dbReference type="EC" id="1.17.7.3"/>
    </reaction>
</comment>
<comment type="cofactor">
    <cofactor evidence="1">
        <name>[4Fe-4S] cluster</name>
        <dbReference type="ChEBI" id="CHEBI:49883"/>
    </cofactor>
    <text evidence="1">Binds 1 [4Fe-4S] cluster.</text>
</comment>
<comment type="pathway">
    <text evidence="1">Isoprenoid biosynthesis; isopentenyl diphosphate biosynthesis via DXP pathway; isopentenyl diphosphate from 1-deoxy-D-xylulose 5-phosphate: step 5/6.</text>
</comment>
<comment type="similarity">
    <text evidence="1">Belongs to the IspG family.</text>
</comment>
<name>ISPG_ACIB5</name>
<feature type="chain" id="PRO_1000118159" description="4-hydroxy-3-methylbut-2-en-1-yl diphosphate synthase (flavodoxin)">
    <location>
        <begin position="1"/>
        <end position="371"/>
    </location>
</feature>
<feature type="binding site" evidence="1">
    <location>
        <position position="269"/>
    </location>
    <ligand>
        <name>[4Fe-4S] cluster</name>
        <dbReference type="ChEBI" id="CHEBI:49883"/>
    </ligand>
</feature>
<feature type="binding site" evidence="1">
    <location>
        <position position="272"/>
    </location>
    <ligand>
        <name>[4Fe-4S] cluster</name>
        <dbReference type="ChEBI" id="CHEBI:49883"/>
    </ligand>
</feature>
<feature type="binding site" evidence="1">
    <location>
        <position position="304"/>
    </location>
    <ligand>
        <name>[4Fe-4S] cluster</name>
        <dbReference type="ChEBI" id="CHEBI:49883"/>
    </ligand>
</feature>
<feature type="binding site" evidence="1">
    <location>
        <position position="311"/>
    </location>
    <ligand>
        <name>[4Fe-4S] cluster</name>
        <dbReference type="ChEBI" id="CHEBI:49883"/>
    </ligand>
</feature>
<sequence length="371" mass="40443">MIENPIKRRPTRKIRVGSVYVGGDAPISVQSMTNTETCDVDATVAQIERCVDAGADIMRVSVPSMEAAEAFGAIRKRVSVPLVADIHFDHRIALAVADYGADCLRINPGNIGSDQKVREVVAAARHHGISMRIGVNAGSLEKDLQKKYGEPTGQALLESALRHIDILDRLDFHEFKVSVKASNVFLTMDAYRLLSQQIDNPLHLGVTEAGIYRTGTVKSAIALGGLLMEGIGDTMRISLAAEPEDEIKIGFDILKSLGLRSNGINFIACPSCSRQEFNVIQVMQALEERLEDIRTPMDVSVIGCKVNGPGEAKEADIGVVGAAPRSLVYRNGEKSHLIDTNQLVDEIETMVRQRVQELEEAKSKEIIRSSS</sequence>
<proteinExistence type="inferred from homology"/>
<protein>
    <recommendedName>
        <fullName evidence="1">4-hydroxy-3-methylbut-2-en-1-yl diphosphate synthase (flavodoxin)</fullName>
        <ecNumber evidence="1">1.17.7.3</ecNumber>
    </recommendedName>
    <alternativeName>
        <fullName evidence="1">1-hydroxy-2-methyl-2-(E)-butenyl 4-diphosphate synthase</fullName>
    </alternativeName>
</protein>
<evidence type="ECO:0000255" key="1">
    <source>
        <dbReference type="HAMAP-Rule" id="MF_00159"/>
    </source>
</evidence>
<reference key="1">
    <citation type="journal article" date="2008" name="J. Bacteriol.">
        <title>Comparative genome sequence analysis of multidrug-resistant Acinetobacter baumannii.</title>
        <authorList>
            <person name="Adams M.D."/>
            <person name="Goglin K."/>
            <person name="Molyneaux N."/>
            <person name="Hujer K.M."/>
            <person name="Lavender H."/>
            <person name="Jamison J.J."/>
            <person name="MacDonald I.J."/>
            <person name="Martin K.M."/>
            <person name="Russo T."/>
            <person name="Campagnari A.A."/>
            <person name="Hujer A.M."/>
            <person name="Bonomo R.A."/>
            <person name="Gill S.R."/>
        </authorList>
    </citation>
    <scope>NUCLEOTIDE SEQUENCE [LARGE SCALE GENOMIC DNA]</scope>
    <source>
        <strain>AB0057</strain>
    </source>
</reference>
<accession>B7I5G7</accession>